<sequence>MSRRSLSLWFPLLLLLLLPPTPSVLLADPGVPSPVNPCCYYPCQNQGVCVRFGLDNYQCDCTRTGYSGPNCTIPEIWTWLRNSLRPSPSFTHFLLTHGYWLWEFVNATFIREVLMRLVLTVRSNLIPSPPTYNSAHDYISWESFSNVSYYTRILPSVPKDCPTPMGTKGKKQLPDVQLLAQQLLLRREFIPAPQGTNILFAFFAQHFTHQFFKTSGKMGPGFTKALGHGVDLGHIYGDNLERQYHLRLFKDGKLKYQVLDGEVYPPSVEQASVLMRYPPGVPPERQMAVGQEVFGLLPGLMLFSTIWLREHNRVCDLLKEEHPTWDDEQLFQTTRLILIGETIKIVIEEYVQHLSGYFLQLKFDPELLFRAQFQYRNRIAMEFNHLYHWHPLMPNSFQVGSQEYSYEQFLFNTSMLVDYGVEALVDAFSRQRAGRIGGGRNFDYHVLHVAVDVIKESREMRLQPFNEYRKRFGLKPYTSFQELTGEKEMAAELEELYGDIDALEFYPGLLLEKCQPNSIFGESMIEMGAPFSLKGLLGNPICSPEYWKPSTFGGDVGFNLVNTASLKKLVCLNTKTCPYVSFRVPDYPGDDGSVLVRRSTEL</sequence>
<dbReference type="EC" id="1.14.99.1" evidence="3"/>
<dbReference type="EMBL" id="M34141">
    <property type="protein sequence ID" value="AAA39913.1"/>
    <property type="molecule type" value="mRNA"/>
</dbReference>
<dbReference type="EMBL" id="BC005573">
    <property type="protein sequence ID" value="AAH05573.1"/>
    <property type="molecule type" value="mRNA"/>
</dbReference>
<dbReference type="CCDS" id="CCDS15970.1"/>
<dbReference type="PIR" id="A35564">
    <property type="entry name" value="A35564"/>
</dbReference>
<dbReference type="RefSeq" id="NP_032995.1">
    <property type="nucleotide sequence ID" value="NM_008969.4"/>
</dbReference>
<dbReference type="RefSeq" id="XP_006497853.1">
    <property type="nucleotide sequence ID" value="XM_006497790.5"/>
</dbReference>
<dbReference type="RefSeq" id="XP_006497854.1">
    <property type="nucleotide sequence ID" value="XM_006497791.5"/>
</dbReference>
<dbReference type="RefSeq" id="XP_011237338.1">
    <property type="nucleotide sequence ID" value="XM_011239036.4"/>
</dbReference>
<dbReference type="RefSeq" id="XP_017171985.1">
    <property type="nucleotide sequence ID" value="XM_017316496.1"/>
</dbReference>
<dbReference type="SMR" id="P22437"/>
<dbReference type="BioGRID" id="202462">
    <property type="interactions" value="5"/>
</dbReference>
<dbReference type="FunCoup" id="P22437">
    <property type="interactions" value="326"/>
</dbReference>
<dbReference type="STRING" id="10090.ENSMUSP00000059977"/>
<dbReference type="BindingDB" id="P22437"/>
<dbReference type="ChEMBL" id="CHEMBL2649"/>
<dbReference type="DrugCentral" id="P22437"/>
<dbReference type="PeroxiBase" id="3361">
    <property type="entry name" value="MmPGHS01"/>
</dbReference>
<dbReference type="GlyCosmos" id="P22437">
    <property type="glycosylation" value="3 sites, No reported glycans"/>
</dbReference>
<dbReference type="GlyGen" id="P22437">
    <property type="glycosylation" value="4 sites"/>
</dbReference>
<dbReference type="PhosphoSitePlus" id="P22437"/>
<dbReference type="SwissPalm" id="P22437"/>
<dbReference type="PaxDb" id="10090-ENSMUSP00000059977"/>
<dbReference type="PeptideAtlas" id="P22437"/>
<dbReference type="ProteomicsDB" id="287690"/>
<dbReference type="Pumba" id="P22437"/>
<dbReference type="Antibodypedia" id="775">
    <property type="antibodies" value="687 antibodies from 43 providers"/>
</dbReference>
<dbReference type="DNASU" id="19224"/>
<dbReference type="Ensembl" id="ENSMUST00000062069.6">
    <property type="protein sequence ID" value="ENSMUSP00000059977.6"/>
    <property type="gene ID" value="ENSMUSG00000047250.14"/>
</dbReference>
<dbReference type="GeneID" id="19224"/>
<dbReference type="KEGG" id="mmu:19224"/>
<dbReference type="UCSC" id="uc008jll.2">
    <property type="organism name" value="mouse"/>
</dbReference>
<dbReference type="AGR" id="MGI:97797"/>
<dbReference type="CTD" id="5742"/>
<dbReference type="MGI" id="MGI:97797">
    <property type="gene designation" value="Ptgs1"/>
</dbReference>
<dbReference type="VEuPathDB" id="HostDB:ENSMUSG00000047250"/>
<dbReference type="eggNOG" id="KOG2408">
    <property type="taxonomic scope" value="Eukaryota"/>
</dbReference>
<dbReference type="GeneTree" id="ENSGT00390000010743"/>
<dbReference type="HOGENOM" id="CLU_022428_0_0_1"/>
<dbReference type="InParanoid" id="P22437"/>
<dbReference type="OMA" id="LFGSQFQ"/>
<dbReference type="OrthoDB" id="823504at2759"/>
<dbReference type="PhylomeDB" id="P22437"/>
<dbReference type="TreeFam" id="TF329675"/>
<dbReference type="Reactome" id="R-MMU-140180">
    <property type="pathway name" value="COX reactions"/>
</dbReference>
<dbReference type="Reactome" id="R-MMU-2162123">
    <property type="pathway name" value="Synthesis of Prostaglandins (PG) and Thromboxanes (TX)"/>
</dbReference>
<dbReference type="UniPathway" id="UPA00662"/>
<dbReference type="BioGRID-ORCS" id="19224">
    <property type="hits" value="5 hits in 81 CRISPR screens"/>
</dbReference>
<dbReference type="ChiTaRS" id="Ptgs1">
    <property type="organism name" value="mouse"/>
</dbReference>
<dbReference type="PRO" id="PR:P22437"/>
<dbReference type="Proteomes" id="UP000000589">
    <property type="component" value="Chromosome 2"/>
</dbReference>
<dbReference type="RNAct" id="P22437">
    <property type="molecule type" value="protein"/>
</dbReference>
<dbReference type="Bgee" id="ENSMUSG00000047250">
    <property type="expression patterns" value="Expressed in renal medulla collecting duct and 222 other cell types or tissues"/>
</dbReference>
<dbReference type="ExpressionAtlas" id="P22437">
    <property type="expression patterns" value="baseline and differential"/>
</dbReference>
<dbReference type="GO" id="GO:0005737">
    <property type="term" value="C:cytoplasm"/>
    <property type="evidence" value="ECO:0000314"/>
    <property type="project" value="MGI"/>
</dbReference>
<dbReference type="GO" id="GO:0005789">
    <property type="term" value="C:endoplasmic reticulum membrane"/>
    <property type="evidence" value="ECO:0007669"/>
    <property type="project" value="UniProtKB-SubCell"/>
</dbReference>
<dbReference type="GO" id="GO:0001750">
    <property type="term" value="C:photoreceptor outer segment"/>
    <property type="evidence" value="ECO:0000314"/>
    <property type="project" value="MGI"/>
</dbReference>
<dbReference type="GO" id="GO:0051213">
    <property type="term" value="F:dioxygenase activity"/>
    <property type="evidence" value="ECO:0007669"/>
    <property type="project" value="UniProtKB-KW"/>
</dbReference>
<dbReference type="GO" id="GO:0020037">
    <property type="term" value="F:heme binding"/>
    <property type="evidence" value="ECO:0007669"/>
    <property type="project" value="InterPro"/>
</dbReference>
<dbReference type="GO" id="GO:0046872">
    <property type="term" value="F:metal ion binding"/>
    <property type="evidence" value="ECO:0007669"/>
    <property type="project" value="UniProtKB-KW"/>
</dbReference>
<dbReference type="GO" id="GO:0004601">
    <property type="term" value="F:peroxidase activity"/>
    <property type="evidence" value="ECO:0007669"/>
    <property type="project" value="UniProtKB-KW"/>
</dbReference>
<dbReference type="GO" id="GO:0004666">
    <property type="term" value="F:prostaglandin-endoperoxide synthase activity"/>
    <property type="evidence" value="ECO:0007669"/>
    <property type="project" value="UniProtKB-EC"/>
</dbReference>
<dbReference type="GO" id="GO:0019371">
    <property type="term" value="P:cyclooxygenase pathway"/>
    <property type="evidence" value="ECO:0007669"/>
    <property type="project" value="Ensembl"/>
</dbReference>
<dbReference type="GO" id="GO:0030216">
    <property type="term" value="P:keratinocyte differentiation"/>
    <property type="evidence" value="ECO:0000303"/>
    <property type="project" value="UniProtKB"/>
</dbReference>
<dbReference type="GO" id="GO:0001516">
    <property type="term" value="P:prostaglandin biosynthetic process"/>
    <property type="evidence" value="ECO:0000315"/>
    <property type="project" value="MGI"/>
</dbReference>
<dbReference type="GO" id="GO:0006693">
    <property type="term" value="P:prostaglandin metabolic process"/>
    <property type="evidence" value="ECO:0000315"/>
    <property type="project" value="MGI"/>
</dbReference>
<dbReference type="GO" id="GO:0008217">
    <property type="term" value="P:regulation of blood pressure"/>
    <property type="evidence" value="ECO:0000315"/>
    <property type="project" value="MGI"/>
</dbReference>
<dbReference type="GO" id="GO:0042127">
    <property type="term" value="P:regulation of cell population proliferation"/>
    <property type="evidence" value="ECO:0000316"/>
    <property type="project" value="MGI"/>
</dbReference>
<dbReference type="GO" id="GO:0006979">
    <property type="term" value="P:response to oxidative stress"/>
    <property type="evidence" value="ECO:0007669"/>
    <property type="project" value="InterPro"/>
</dbReference>
<dbReference type="CDD" id="cd00054">
    <property type="entry name" value="EGF_CA"/>
    <property type="match status" value="1"/>
</dbReference>
<dbReference type="CDD" id="cd09816">
    <property type="entry name" value="prostaglandin_endoperoxide_synthase"/>
    <property type="match status" value="1"/>
</dbReference>
<dbReference type="FunFam" id="1.10.640.10:FF:000002">
    <property type="entry name" value="Prostaglandin G/H synthase 2"/>
    <property type="match status" value="1"/>
</dbReference>
<dbReference type="FunFam" id="2.10.25.10:FF:000235">
    <property type="entry name" value="Prostaglandin G/H synthase 2"/>
    <property type="match status" value="1"/>
</dbReference>
<dbReference type="Gene3D" id="1.10.640.10">
    <property type="entry name" value="Haem peroxidase domain superfamily, animal type"/>
    <property type="match status" value="1"/>
</dbReference>
<dbReference type="Gene3D" id="2.10.25.10">
    <property type="entry name" value="Laminin"/>
    <property type="match status" value="1"/>
</dbReference>
<dbReference type="InterPro" id="IPR000742">
    <property type="entry name" value="EGF-like_dom"/>
</dbReference>
<dbReference type="InterPro" id="IPR019791">
    <property type="entry name" value="Haem_peroxidase_animal"/>
</dbReference>
<dbReference type="InterPro" id="IPR010255">
    <property type="entry name" value="Haem_peroxidase_sf"/>
</dbReference>
<dbReference type="InterPro" id="IPR037120">
    <property type="entry name" value="Haem_peroxidase_sf_animal"/>
</dbReference>
<dbReference type="InterPro" id="IPR050783">
    <property type="entry name" value="Oxylipin_biosynth_metab"/>
</dbReference>
<dbReference type="PANTHER" id="PTHR11903">
    <property type="entry name" value="PROSTAGLANDIN G/H SYNTHASE"/>
    <property type="match status" value="1"/>
</dbReference>
<dbReference type="PANTHER" id="PTHR11903:SF6">
    <property type="entry name" value="PROSTAGLANDIN G_H SYNTHASE 1"/>
    <property type="match status" value="1"/>
</dbReference>
<dbReference type="Pfam" id="PF03098">
    <property type="entry name" value="An_peroxidase"/>
    <property type="match status" value="1"/>
</dbReference>
<dbReference type="PRINTS" id="PR00457">
    <property type="entry name" value="ANPEROXIDASE"/>
</dbReference>
<dbReference type="SUPFAM" id="SSF57196">
    <property type="entry name" value="EGF/Laminin"/>
    <property type="match status" value="1"/>
</dbReference>
<dbReference type="SUPFAM" id="SSF48113">
    <property type="entry name" value="Heme-dependent peroxidases"/>
    <property type="match status" value="1"/>
</dbReference>
<dbReference type="PROSITE" id="PS50026">
    <property type="entry name" value="EGF_3"/>
    <property type="match status" value="1"/>
</dbReference>
<dbReference type="PROSITE" id="PS50292">
    <property type="entry name" value="PEROXIDASE_3"/>
    <property type="match status" value="1"/>
</dbReference>
<organism>
    <name type="scientific">Mus musculus</name>
    <name type="common">Mouse</name>
    <dbReference type="NCBI Taxonomy" id="10090"/>
    <lineage>
        <taxon>Eukaryota</taxon>
        <taxon>Metazoa</taxon>
        <taxon>Chordata</taxon>
        <taxon>Craniata</taxon>
        <taxon>Vertebrata</taxon>
        <taxon>Euteleostomi</taxon>
        <taxon>Mammalia</taxon>
        <taxon>Eutheria</taxon>
        <taxon>Euarchontoglires</taxon>
        <taxon>Glires</taxon>
        <taxon>Rodentia</taxon>
        <taxon>Myomorpha</taxon>
        <taxon>Muroidea</taxon>
        <taxon>Muridae</taxon>
        <taxon>Murinae</taxon>
        <taxon>Mus</taxon>
        <taxon>Mus</taxon>
    </lineage>
</organism>
<proteinExistence type="evidence at protein level"/>
<gene>
    <name evidence="8" type="primary">Ptgs1</name>
    <name type="synonym">Cox-1</name>
    <name type="synonym">Cox1</name>
</gene>
<accession>P22437</accession>
<feature type="signal peptide">
    <location>
        <begin position="1"/>
        <end position="26"/>
    </location>
</feature>
<feature type="chain" id="PRO_0000023869" description="Prostaglandin G/H synthase 1">
    <location>
        <begin position="27"/>
        <end position="602"/>
    </location>
</feature>
<feature type="domain" description="EGF-like" evidence="5">
    <location>
        <begin position="34"/>
        <end position="72"/>
    </location>
</feature>
<feature type="active site" description="Proton acceptor" evidence="6">
    <location>
        <position position="209"/>
    </location>
</feature>
<feature type="active site" description="For cyclooxygenase activity" evidence="1">
    <location>
        <position position="387"/>
    </location>
</feature>
<feature type="binding site" description="axial binding residue" evidence="6">
    <location>
        <position position="390"/>
    </location>
    <ligand>
        <name>heme b</name>
        <dbReference type="ChEBI" id="CHEBI:60344"/>
    </ligand>
    <ligandPart>
        <name>Fe</name>
        <dbReference type="ChEBI" id="CHEBI:18248"/>
    </ligandPart>
</feature>
<feature type="site" description="Aspirin-acetylated serine">
    <location>
        <position position="532"/>
    </location>
</feature>
<feature type="glycosylation site" description="N-linked (GlcNAc...) asparagine" evidence="4">
    <location>
        <position position="70"/>
    </location>
</feature>
<feature type="glycosylation site" description="N-linked (GlcNAc...) asparagine" evidence="4">
    <location>
        <position position="106"/>
    </location>
</feature>
<feature type="glycosylation site" description="N-linked (GlcNAc...) asparagine" evidence="4">
    <location>
        <position position="146"/>
    </location>
</feature>
<feature type="disulfide bond" evidence="1">
    <location>
        <begin position="38"/>
        <end position="49"/>
    </location>
</feature>
<feature type="disulfide bond" evidence="1">
    <location>
        <begin position="39"/>
        <end position="161"/>
    </location>
</feature>
<feature type="disulfide bond" evidence="1">
    <location>
        <begin position="43"/>
        <end position="59"/>
    </location>
</feature>
<feature type="disulfide bond" evidence="1">
    <location>
        <begin position="61"/>
        <end position="71"/>
    </location>
</feature>
<feature type="disulfide bond" evidence="1">
    <location>
        <begin position="571"/>
        <end position="577"/>
    </location>
</feature>
<protein>
    <recommendedName>
        <fullName evidence="7">Prostaglandin G/H synthase 1</fullName>
        <ecNumber evidence="3">1.14.99.1</ecNumber>
    </recommendedName>
    <alternativeName>
        <fullName>Cyclooxygenase-1</fullName>
        <shortName>COX-1</shortName>
    </alternativeName>
    <alternativeName>
        <fullName>Prostaglandin H2 synthase 1</fullName>
        <shortName>PGH synthase 1</shortName>
        <shortName>PGHS-1</shortName>
        <shortName>PHS 1</shortName>
    </alternativeName>
    <alternativeName>
        <fullName>Prostaglandin-endoperoxide synthase 1</fullName>
    </alternativeName>
</protein>
<name>PGH1_MOUSE</name>
<reference key="1">
    <citation type="journal article" date="1990" name="J. Biol. Chem.">
        <title>The aspirin and heme-binding sites of ovine and murine prostaglandin endoperoxide synthases.</title>
        <authorList>
            <person name="Dewitt D.L."/>
            <person name="El-Harith E.A."/>
            <person name="Kraemer S.A."/>
            <person name="Andrews M.J."/>
            <person name="Yao E.F."/>
            <person name="Armstrong R.L."/>
            <person name="Smith W.L."/>
        </authorList>
    </citation>
    <scope>NUCLEOTIDE SEQUENCE [MRNA]</scope>
</reference>
<reference key="2">
    <citation type="journal article" date="2004" name="Genome Res.">
        <title>The status, quality, and expansion of the NIH full-length cDNA project: the Mammalian Gene Collection (MGC).</title>
        <authorList>
            <consortium name="The MGC Project Team"/>
        </authorList>
    </citation>
    <scope>NUCLEOTIDE SEQUENCE [LARGE SCALE MRNA]</scope>
    <source>
        <strain>FVB/N</strain>
        <tissue>Mammary gland</tissue>
    </source>
</reference>
<reference key="3">
    <citation type="journal article" date="2000" name="Annu. Rev. Biochem.">
        <title>Cyclooxygenases: structural, cellular, and molecular biology.</title>
        <authorList>
            <person name="Smith W.L."/>
            <person name="DeWitt D.L."/>
            <person name="Garavito R.M."/>
        </authorList>
    </citation>
    <scope>REVIEW ON FUNCTION; TISSUE SPECIFICITY AND INHIBITION BY NSAIDS</scope>
</reference>
<reference key="4">
    <citation type="journal article" date="2010" name="Cell">
        <title>A tissue-specific atlas of mouse protein phosphorylation and expression.</title>
        <authorList>
            <person name="Huttlin E.L."/>
            <person name="Jedrychowski M.P."/>
            <person name="Elias J.E."/>
            <person name="Goswami T."/>
            <person name="Rad R."/>
            <person name="Beausoleil S.A."/>
            <person name="Villen J."/>
            <person name="Haas W."/>
            <person name="Sowa M.E."/>
            <person name="Gygi S.P."/>
        </authorList>
    </citation>
    <scope>IDENTIFICATION BY MASS SPECTROMETRY [LARGE SCALE ANALYSIS]</scope>
    <source>
        <tissue>Kidney</tissue>
        <tissue>Liver</tissue>
        <tissue>Lung</tissue>
        <tissue>Spleen</tissue>
    </source>
</reference>
<reference key="5">
    <citation type="journal article" date="2014" name="World J. Gastrointest. Pharmacol. Ther.">
        <title>Aspirin, cyclooxygenase inhibition and colorectal cancer.</title>
        <authorList>
            <person name="Sostres C."/>
            <person name="Gargallo C.J."/>
            <person name="Lanas A."/>
        </authorList>
    </citation>
    <scope>REVIEW ON FUNCTION; INHIBITION BY ASPIRIN AND INVOLVEMENT IN COLORECTAL CANCER</scope>
</reference>
<keyword id="KW-0223">Dioxygenase</keyword>
<keyword id="KW-1015">Disulfide bond</keyword>
<keyword id="KW-0245">EGF-like domain</keyword>
<keyword id="KW-0256">Endoplasmic reticulum</keyword>
<keyword id="KW-0275">Fatty acid biosynthesis</keyword>
<keyword id="KW-0276">Fatty acid metabolism</keyword>
<keyword id="KW-0325">Glycoprotein</keyword>
<keyword id="KW-0349">Heme</keyword>
<keyword id="KW-0408">Iron</keyword>
<keyword id="KW-0444">Lipid biosynthesis</keyword>
<keyword id="KW-0443">Lipid metabolism</keyword>
<keyword id="KW-0472">Membrane</keyword>
<keyword id="KW-0479">Metal-binding</keyword>
<keyword id="KW-0492">Microsome</keyword>
<keyword id="KW-0560">Oxidoreductase</keyword>
<keyword id="KW-0575">Peroxidase</keyword>
<keyword id="KW-0643">Prostaglandin biosynthesis</keyword>
<keyword id="KW-0644">Prostaglandin metabolism</keyword>
<keyword id="KW-1185">Reference proteome</keyword>
<keyword id="KW-0732">Signal</keyword>
<evidence type="ECO:0000250" key="1"/>
<evidence type="ECO:0000250" key="2">
    <source>
        <dbReference type="UniProtKB" id="P05979"/>
    </source>
</evidence>
<evidence type="ECO:0000250" key="3">
    <source>
        <dbReference type="UniProtKB" id="P23219"/>
    </source>
</evidence>
<evidence type="ECO:0000255" key="4"/>
<evidence type="ECO:0000255" key="5">
    <source>
        <dbReference type="PROSITE-ProRule" id="PRU00076"/>
    </source>
</evidence>
<evidence type="ECO:0000255" key="6">
    <source>
        <dbReference type="PROSITE-ProRule" id="PRU00298"/>
    </source>
</evidence>
<evidence type="ECO:0000305" key="7"/>
<evidence type="ECO:0000312" key="8">
    <source>
        <dbReference type="MGI" id="MGI:97797"/>
    </source>
</evidence>
<comment type="function">
    <text evidence="2">Dual cyclooxygenase and peroxidase that plays an important role in the biosynthesis pathway of prostanoids, a class of C20 oxylipins mainly derived from arachidonate ((5Z,8Z,11Z,14Z)-eicosatetraenoate, AA, C20:4(n-6)), with a particular role in the inflammatory response. The cyclooxygenase activity oxygenates AA to the hydroperoxy endoperoxide prostaglandin G2 (PGG2), and the peroxidase activity reduces PGG2 to the hydroxy endoperoxide prostaglandin H2 (PGH2), the precursor of all 2-series prostaglandins and thromboxanes. This complex transformation is initiated by abstraction of hydrogen at carbon 13 (with S-stereochemistry), followed by insertion of molecular O2 to form the endoperoxide bridge between carbon 9 and 11 that defines prostaglandins. The insertion of a second molecule of O2 (bis-oxygenase activity) yields a hydroperoxy group in PGG2 that is then reduced to PGH2 by two electrons. Involved in the constitutive production of prostanoids in particular in the stomach and platelets. In gastric epithelial cells, it is a key step in the generation of prostaglandins, such as prostaglandin E2 (PGE2), which plays an important role in cytoprotection. In platelets, it is involved in the generation of thromboxane A2 (TXA2), which promotes platelet activation and aggregation, vasoconstriction and proliferation of vascular smooth muscle cells. Can also use linoleate (LA, (9Z,12Z)-octadecadienoate, C18:2(n-6)) as substrate and produce hydroxyoctadecadienoates (HODEs) in a regio- and stereospecific manner, being (9R)-HODE ((9R)-hydroxy-(10E,12Z)-octadecadienoate) and (13S)-HODE ((13S)-hydroxy-(9Z,11E)-octadecadienoate) its major products.</text>
</comment>
<comment type="catalytic activity">
    <reaction evidence="3">
        <text>(5Z,8Z,11Z,14Z)-eicosatetraenoate + AH2 + 2 O2 = prostaglandin H2 + A + H2O</text>
        <dbReference type="Rhea" id="RHEA:23728"/>
        <dbReference type="ChEBI" id="CHEBI:13193"/>
        <dbReference type="ChEBI" id="CHEBI:15377"/>
        <dbReference type="ChEBI" id="CHEBI:15379"/>
        <dbReference type="ChEBI" id="CHEBI:17499"/>
        <dbReference type="ChEBI" id="CHEBI:32395"/>
        <dbReference type="ChEBI" id="CHEBI:57405"/>
        <dbReference type="EC" id="1.14.99.1"/>
    </reaction>
    <physiologicalReaction direction="left-to-right" evidence="3">
        <dbReference type="Rhea" id="RHEA:23729"/>
    </physiologicalReaction>
</comment>
<comment type="catalytic activity">
    <reaction evidence="3">
        <text>(5Z,8Z,11Z,14Z)-eicosatetraenoate + 2 O2 = prostaglandin G2</text>
        <dbReference type="Rhea" id="RHEA:42596"/>
        <dbReference type="ChEBI" id="CHEBI:15379"/>
        <dbReference type="ChEBI" id="CHEBI:32395"/>
        <dbReference type="ChEBI" id="CHEBI:82629"/>
    </reaction>
    <physiologicalReaction direction="left-to-right" evidence="3">
        <dbReference type="Rhea" id="RHEA:42597"/>
    </physiologicalReaction>
</comment>
<comment type="catalytic activity">
    <reaction evidence="3">
        <text>prostaglandin G2 + AH2 = prostaglandin H2 + A + H2O</text>
        <dbReference type="Rhea" id="RHEA:42600"/>
        <dbReference type="ChEBI" id="CHEBI:13193"/>
        <dbReference type="ChEBI" id="CHEBI:15377"/>
        <dbReference type="ChEBI" id="CHEBI:17499"/>
        <dbReference type="ChEBI" id="CHEBI:57405"/>
        <dbReference type="ChEBI" id="CHEBI:82629"/>
    </reaction>
    <physiologicalReaction direction="left-to-right" evidence="3">
        <dbReference type="Rhea" id="RHEA:42601"/>
    </physiologicalReaction>
</comment>
<comment type="catalytic activity">
    <reaction evidence="2">
        <text>(9Z,12Z)-octadecadienoate + AH2 + O2 = (9R)-hydroxy-(10E,12Z)-octadecadienoate + A + H2O</text>
        <dbReference type="Rhea" id="RHEA:75447"/>
        <dbReference type="ChEBI" id="CHEBI:13193"/>
        <dbReference type="ChEBI" id="CHEBI:15377"/>
        <dbReference type="ChEBI" id="CHEBI:15379"/>
        <dbReference type="ChEBI" id="CHEBI:17499"/>
        <dbReference type="ChEBI" id="CHEBI:30245"/>
        <dbReference type="ChEBI" id="CHEBI:77895"/>
    </reaction>
    <physiologicalReaction direction="left-to-right" evidence="2">
        <dbReference type="Rhea" id="RHEA:75448"/>
    </physiologicalReaction>
</comment>
<comment type="catalytic activity">
    <reaction evidence="2">
        <text>(9Z,12Z)-octadecadienoate + AH2 + O2 = (9S)-hydroxy-(10E,12Z)-octadecadienoate + A + H2O</text>
        <dbReference type="Rhea" id="RHEA:75459"/>
        <dbReference type="ChEBI" id="CHEBI:13193"/>
        <dbReference type="ChEBI" id="CHEBI:15377"/>
        <dbReference type="ChEBI" id="CHEBI:15379"/>
        <dbReference type="ChEBI" id="CHEBI:17499"/>
        <dbReference type="ChEBI" id="CHEBI:30245"/>
        <dbReference type="ChEBI" id="CHEBI:77852"/>
    </reaction>
    <physiologicalReaction direction="left-to-right" evidence="2">
        <dbReference type="Rhea" id="RHEA:75460"/>
    </physiologicalReaction>
</comment>
<comment type="catalytic activity">
    <reaction evidence="2">
        <text>(9Z,12Z)-octadecadienoate + AH2 + O2 = (13S)-hydroxy-(9Z,11E)-octadecadienoate + A + H2O</text>
        <dbReference type="Rhea" id="RHEA:75451"/>
        <dbReference type="ChEBI" id="CHEBI:13193"/>
        <dbReference type="ChEBI" id="CHEBI:15377"/>
        <dbReference type="ChEBI" id="CHEBI:15379"/>
        <dbReference type="ChEBI" id="CHEBI:17499"/>
        <dbReference type="ChEBI" id="CHEBI:30245"/>
        <dbReference type="ChEBI" id="CHEBI:90850"/>
    </reaction>
    <physiologicalReaction direction="left-to-right" evidence="2">
        <dbReference type="Rhea" id="RHEA:75452"/>
    </physiologicalReaction>
</comment>
<comment type="catalytic activity">
    <reaction evidence="2">
        <text>(9Z,12Z)-octadecadienoate + AH2 + O2 = (13R)-hydroxy-(9Z,11E)-octadecadienoate + A + H2O</text>
        <dbReference type="Rhea" id="RHEA:75455"/>
        <dbReference type="ChEBI" id="CHEBI:13193"/>
        <dbReference type="ChEBI" id="CHEBI:15377"/>
        <dbReference type="ChEBI" id="CHEBI:15379"/>
        <dbReference type="ChEBI" id="CHEBI:17499"/>
        <dbReference type="ChEBI" id="CHEBI:30245"/>
        <dbReference type="ChEBI" id="CHEBI:136655"/>
    </reaction>
    <physiologicalReaction direction="left-to-right" evidence="2">
        <dbReference type="Rhea" id="RHEA:75456"/>
    </physiologicalReaction>
</comment>
<comment type="cofactor">
    <cofactor evidence="1">
        <name>heme b</name>
        <dbReference type="ChEBI" id="CHEBI:60344"/>
    </cofactor>
    <text evidence="1">Binds 1 heme b (iron(II)-protoporphyrin IX) group per subunit.</text>
</comment>
<comment type="activity regulation">
    <text evidence="3">The cyclooxygenase activity is inhibited by nonsteroidal anti-inflammatory drugs (NSAIDs) including ibuprofen, flurbiprofen, ketoprofen, naproxen, flurbiprofen, anirolac, fenclofenac and diclofenac.</text>
</comment>
<comment type="pathway">
    <text evidence="3">Lipid metabolism; prostaglandin biosynthesis.</text>
</comment>
<comment type="subunit">
    <text>Homodimer.</text>
</comment>
<comment type="subcellular location">
    <subcellularLocation>
        <location>Microsome membrane</location>
        <topology>Peripheral membrane protein</topology>
    </subcellularLocation>
    <subcellularLocation>
        <location>Endoplasmic reticulum membrane</location>
        <topology>Peripheral membrane protein</topology>
    </subcellularLocation>
</comment>
<comment type="miscellaneous">
    <text>The conversion of arachidonate to prostaglandin H2 is a 2 step reaction: a cyclooxygenase (COX) reaction which converts arachidonate to prostaglandin G2 (PGG2) and a peroxidase reaction in which PGG2 is reduced to prostaglandin H2 (PGH2). The cyclooxygenase reaction occurs in a hydrophobic channel in the core of the enzyme. The peroxidase reaction occurs at a heme-containing active site located near the protein surface. The nonsteroidal anti-inflammatory drugs (NSAIDs) binding site corresponds to the cyclooxygenase active site.</text>
</comment>
<comment type="miscellaneous">
    <text>Conversion of arachidonate to prostaglandin H2 is mediated by 2 different isozymes: the constitutive PTGS1 and the inducible PTGS2. PTGS1 is expressed constitutively and generally produces prostanoids acutely in response to hormonal stimuli to fine-tune physiological processes requiring instantaneous, continuous regulation (e.g. hemostasis). PTGS2 is inducible and typically produces prostanoids that mediate responses to physiological stresses such as infection and inflammation.</text>
</comment>
<comment type="miscellaneous">
    <text>PTGS1 and PTGS2 are the targets of nonsteroidal anti-inflammatory drugs (NSAIDs) including aspirin and ibuprofen. Aspirin is able to produce an irreversible inactivation of the enzyme through a serine acetylation. Inhibition of the PGHSs with NSAIDs acutely reduces inflammation, pain, and fever, and long-term use of these drugs reduces fatal thrombotic events, as well as the development of colon cancer and Alzheimer's disease. PTGS2 is the principal isozyme responsible for production of inflammatory prostaglandins. New generation PTGSs inhibitors strive to be selective for PTGS2, to avoid side effects such as gastrointestinal complications and ulceration.</text>
</comment>
<comment type="similarity">
    <text evidence="7">Belongs to the prostaglandin G/H synthase family.</text>
</comment>